<name>ISPD_CLOD6</name>
<keyword id="KW-0414">Isoprene biosynthesis</keyword>
<keyword id="KW-0548">Nucleotidyltransferase</keyword>
<keyword id="KW-1185">Reference proteome</keyword>
<keyword id="KW-0808">Transferase</keyword>
<organism>
    <name type="scientific">Clostridioides difficile (strain 630)</name>
    <name type="common">Peptoclostridium difficile</name>
    <dbReference type="NCBI Taxonomy" id="272563"/>
    <lineage>
        <taxon>Bacteria</taxon>
        <taxon>Bacillati</taxon>
        <taxon>Bacillota</taxon>
        <taxon>Clostridia</taxon>
        <taxon>Peptostreptococcales</taxon>
        <taxon>Peptostreptococcaceae</taxon>
        <taxon>Clostridioides</taxon>
    </lineage>
</organism>
<evidence type="ECO:0000255" key="1">
    <source>
        <dbReference type="HAMAP-Rule" id="MF_00108"/>
    </source>
</evidence>
<dbReference type="EC" id="2.7.7.60" evidence="1"/>
<dbReference type="EMBL" id="AM180355">
    <property type="protein sequence ID" value="CAJ66861.1"/>
    <property type="molecule type" value="Genomic_DNA"/>
</dbReference>
<dbReference type="RefSeq" id="WP_011860629.1">
    <property type="nucleotide sequence ID" value="NZ_JAUPES010000031.1"/>
</dbReference>
<dbReference type="RefSeq" id="YP_001086510.1">
    <property type="nucleotide sequence ID" value="NC_009089.1"/>
</dbReference>
<dbReference type="SMR" id="Q18CD1"/>
<dbReference type="STRING" id="272563.CD630_00470"/>
<dbReference type="EnsemblBacteria" id="CAJ66861">
    <property type="protein sequence ID" value="CAJ66861"/>
    <property type="gene ID" value="CD630_00470"/>
</dbReference>
<dbReference type="KEGG" id="cdf:CD630_00470"/>
<dbReference type="KEGG" id="pdc:CDIF630_00109"/>
<dbReference type="PATRIC" id="fig|272563.120.peg.51"/>
<dbReference type="eggNOG" id="COG1211">
    <property type="taxonomic scope" value="Bacteria"/>
</dbReference>
<dbReference type="OrthoDB" id="9806837at2"/>
<dbReference type="PhylomeDB" id="Q18CD1"/>
<dbReference type="BioCyc" id="PDIF272563:G12WB-99-MONOMER"/>
<dbReference type="UniPathway" id="UPA00056">
    <property type="reaction ID" value="UER00093"/>
</dbReference>
<dbReference type="Proteomes" id="UP000001978">
    <property type="component" value="Chromosome"/>
</dbReference>
<dbReference type="GO" id="GO:0050518">
    <property type="term" value="F:2-C-methyl-D-erythritol 4-phosphate cytidylyltransferase activity"/>
    <property type="evidence" value="ECO:0007669"/>
    <property type="project" value="UniProtKB-UniRule"/>
</dbReference>
<dbReference type="GO" id="GO:0019288">
    <property type="term" value="P:isopentenyl diphosphate biosynthetic process, methylerythritol 4-phosphate pathway"/>
    <property type="evidence" value="ECO:0007669"/>
    <property type="project" value="UniProtKB-UniRule"/>
</dbReference>
<dbReference type="CDD" id="cd02516">
    <property type="entry name" value="CDP-ME_synthetase"/>
    <property type="match status" value="1"/>
</dbReference>
<dbReference type="FunFam" id="3.90.550.10:FF:000003">
    <property type="entry name" value="2-C-methyl-D-erythritol 4-phosphate cytidylyltransferase"/>
    <property type="match status" value="1"/>
</dbReference>
<dbReference type="Gene3D" id="3.90.550.10">
    <property type="entry name" value="Spore Coat Polysaccharide Biosynthesis Protein SpsA, Chain A"/>
    <property type="match status" value="1"/>
</dbReference>
<dbReference type="HAMAP" id="MF_00108">
    <property type="entry name" value="IspD"/>
    <property type="match status" value="1"/>
</dbReference>
<dbReference type="InterPro" id="IPR001228">
    <property type="entry name" value="IspD"/>
</dbReference>
<dbReference type="InterPro" id="IPR034683">
    <property type="entry name" value="IspD/TarI"/>
</dbReference>
<dbReference type="InterPro" id="IPR050088">
    <property type="entry name" value="IspD/TarI_cytidylyltransf_bact"/>
</dbReference>
<dbReference type="InterPro" id="IPR018294">
    <property type="entry name" value="ISPD_synthase_CS"/>
</dbReference>
<dbReference type="InterPro" id="IPR029044">
    <property type="entry name" value="Nucleotide-diphossugar_trans"/>
</dbReference>
<dbReference type="NCBIfam" id="TIGR00453">
    <property type="entry name" value="ispD"/>
    <property type="match status" value="1"/>
</dbReference>
<dbReference type="PANTHER" id="PTHR32125">
    <property type="entry name" value="2-C-METHYL-D-ERYTHRITOL 4-PHOSPHATE CYTIDYLYLTRANSFERASE, CHLOROPLASTIC"/>
    <property type="match status" value="1"/>
</dbReference>
<dbReference type="PANTHER" id="PTHR32125:SF4">
    <property type="entry name" value="2-C-METHYL-D-ERYTHRITOL 4-PHOSPHATE CYTIDYLYLTRANSFERASE, CHLOROPLASTIC"/>
    <property type="match status" value="1"/>
</dbReference>
<dbReference type="Pfam" id="PF01128">
    <property type="entry name" value="IspD"/>
    <property type="match status" value="1"/>
</dbReference>
<dbReference type="SUPFAM" id="SSF53448">
    <property type="entry name" value="Nucleotide-diphospho-sugar transferases"/>
    <property type="match status" value="1"/>
</dbReference>
<dbReference type="PROSITE" id="PS01295">
    <property type="entry name" value="ISPD"/>
    <property type="match status" value="1"/>
</dbReference>
<proteinExistence type="inferred from homology"/>
<sequence>MYSVIIVAAGSGRRMNLDINKQFIKLREKEIIAHTIQVFYENINIDEIVVCIKKEEEDFFKENIINKYNFKNIKIAYGGKERQDSIYNGLKKLDKNCDIVLIHDGARPFVDHRIINESIKVAKEKKAVVVGVPVSDTIKIVSDGTVKETPERNLLWAAQTPQTFEYNLIIDAYEQAYKNNYYGTDDSMLVENIGQSVTMVMGSYENIKITSPEDLNIAEQILNMEKRDEVNSRRRII</sequence>
<protein>
    <recommendedName>
        <fullName evidence="1">2-C-methyl-D-erythritol 4-phosphate cytidylyltransferase</fullName>
        <ecNumber evidence="1">2.7.7.60</ecNumber>
    </recommendedName>
    <alternativeName>
        <fullName evidence="1">4-diphosphocytidyl-2C-methyl-D-erythritol synthase</fullName>
    </alternativeName>
    <alternativeName>
        <fullName evidence="1">MEP cytidylyltransferase</fullName>
        <shortName evidence="1">MCT</shortName>
    </alternativeName>
</protein>
<reference key="1">
    <citation type="journal article" date="2006" name="Nat. Genet.">
        <title>The multidrug-resistant human pathogen Clostridium difficile has a highly mobile, mosaic genome.</title>
        <authorList>
            <person name="Sebaihia M."/>
            <person name="Wren B.W."/>
            <person name="Mullany P."/>
            <person name="Fairweather N.F."/>
            <person name="Minton N."/>
            <person name="Stabler R."/>
            <person name="Thomson N.R."/>
            <person name="Roberts A.P."/>
            <person name="Cerdeno-Tarraga A.M."/>
            <person name="Wang H."/>
            <person name="Holden M.T.G."/>
            <person name="Wright A."/>
            <person name="Churcher C."/>
            <person name="Quail M.A."/>
            <person name="Baker S."/>
            <person name="Bason N."/>
            <person name="Brooks K."/>
            <person name="Chillingworth T."/>
            <person name="Cronin A."/>
            <person name="Davis P."/>
            <person name="Dowd L."/>
            <person name="Fraser A."/>
            <person name="Feltwell T."/>
            <person name="Hance Z."/>
            <person name="Holroyd S."/>
            <person name="Jagels K."/>
            <person name="Moule S."/>
            <person name="Mungall K."/>
            <person name="Price C."/>
            <person name="Rabbinowitsch E."/>
            <person name="Sharp S."/>
            <person name="Simmonds M."/>
            <person name="Stevens K."/>
            <person name="Unwin L."/>
            <person name="Whithead S."/>
            <person name="Dupuy B."/>
            <person name="Dougan G."/>
            <person name="Barrell B."/>
            <person name="Parkhill J."/>
        </authorList>
    </citation>
    <scope>NUCLEOTIDE SEQUENCE [LARGE SCALE GENOMIC DNA]</scope>
    <source>
        <strain>630</strain>
    </source>
</reference>
<comment type="function">
    <text evidence="1">Catalyzes the formation of 4-diphosphocytidyl-2-C-methyl-D-erythritol from CTP and 2-C-methyl-D-erythritol 4-phosphate (MEP).</text>
</comment>
<comment type="catalytic activity">
    <reaction evidence="1">
        <text>2-C-methyl-D-erythritol 4-phosphate + CTP + H(+) = 4-CDP-2-C-methyl-D-erythritol + diphosphate</text>
        <dbReference type="Rhea" id="RHEA:13429"/>
        <dbReference type="ChEBI" id="CHEBI:15378"/>
        <dbReference type="ChEBI" id="CHEBI:33019"/>
        <dbReference type="ChEBI" id="CHEBI:37563"/>
        <dbReference type="ChEBI" id="CHEBI:57823"/>
        <dbReference type="ChEBI" id="CHEBI:58262"/>
        <dbReference type="EC" id="2.7.7.60"/>
    </reaction>
</comment>
<comment type="pathway">
    <text evidence="1">Isoprenoid biosynthesis; isopentenyl diphosphate biosynthesis via DXP pathway; isopentenyl diphosphate from 1-deoxy-D-xylulose 5-phosphate: step 2/6.</text>
</comment>
<comment type="similarity">
    <text evidence="1">Belongs to the IspD/TarI cytidylyltransferase family. IspD subfamily.</text>
</comment>
<accession>Q18CD1</accession>
<feature type="chain" id="PRO_1000094324" description="2-C-methyl-D-erythritol 4-phosphate cytidylyltransferase">
    <location>
        <begin position="1"/>
        <end position="237"/>
    </location>
</feature>
<feature type="site" description="Transition state stabilizer" evidence="1">
    <location>
        <position position="14"/>
    </location>
</feature>
<feature type="site" description="Transition state stabilizer" evidence="1">
    <location>
        <position position="21"/>
    </location>
</feature>
<feature type="site" description="Positions MEP for the nucleophilic attack" evidence="1">
    <location>
        <position position="152"/>
    </location>
</feature>
<feature type="site" description="Positions MEP for the nucleophilic attack" evidence="1">
    <location>
        <position position="208"/>
    </location>
</feature>
<gene>
    <name evidence="1" type="primary">ispD</name>
    <name type="ordered locus">CD630_00470</name>
</gene>